<name>NDUS2_DICDI</name>
<gene>
    <name type="primary">nad7</name>
    <name type="synonym">ndufs2</name>
    <name type="ORF">DDB_G0294030</name>
</gene>
<evidence type="ECO:0000250" key="1">
    <source>
        <dbReference type="UniProtKB" id="O75306"/>
    </source>
</evidence>
<evidence type="ECO:0000305" key="2"/>
<geneLocation type="mitochondrion"/>
<dbReference type="EC" id="7.1.1.2"/>
<dbReference type="EMBL" id="D21196">
    <property type="protein sequence ID" value="BAA04731.1"/>
    <property type="molecule type" value="Genomic_DNA"/>
</dbReference>
<dbReference type="EMBL" id="AB000109">
    <property type="protein sequence ID" value="BAA78067.1"/>
    <property type="molecule type" value="Genomic_DNA"/>
</dbReference>
<dbReference type="PIR" id="T43763">
    <property type="entry name" value="T43763"/>
</dbReference>
<dbReference type="RefSeq" id="NP_050085.1">
    <property type="nucleotide sequence ID" value="NC_000895.1"/>
</dbReference>
<dbReference type="SMR" id="Q23883"/>
<dbReference type="FunCoup" id="Q23883">
    <property type="interactions" value="141"/>
</dbReference>
<dbReference type="STRING" id="44689.Q23883"/>
<dbReference type="GeneID" id="2193913"/>
<dbReference type="KEGG" id="ddi:DidioMp18"/>
<dbReference type="dictyBase" id="DDB_G0294030">
    <property type="gene designation" value="nad7"/>
</dbReference>
<dbReference type="VEuPathDB" id="AmoebaDB:DidioMp18"/>
<dbReference type="InParanoid" id="Q23883"/>
<dbReference type="OMA" id="TRMDYLT"/>
<dbReference type="PhylomeDB" id="Q23883"/>
<dbReference type="Reactome" id="R-DDI-6799198">
    <property type="pathway name" value="Complex I biogenesis"/>
</dbReference>
<dbReference type="PRO" id="PR:Q23883"/>
<dbReference type="Proteomes" id="UP000002195">
    <property type="component" value="Mitochondrion"/>
</dbReference>
<dbReference type="GO" id="GO:0005743">
    <property type="term" value="C:mitochondrial inner membrane"/>
    <property type="evidence" value="ECO:0007669"/>
    <property type="project" value="UniProtKB-SubCell"/>
</dbReference>
<dbReference type="GO" id="GO:0045271">
    <property type="term" value="C:respiratory chain complex I"/>
    <property type="evidence" value="ECO:0000318"/>
    <property type="project" value="GO_Central"/>
</dbReference>
<dbReference type="GO" id="GO:0051287">
    <property type="term" value="F:NAD binding"/>
    <property type="evidence" value="ECO:0007669"/>
    <property type="project" value="InterPro"/>
</dbReference>
<dbReference type="GO" id="GO:0008137">
    <property type="term" value="F:NADH dehydrogenase (ubiquinone) activity"/>
    <property type="evidence" value="ECO:0007669"/>
    <property type="project" value="UniProtKB-EC"/>
</dbReference>
<dbReference type="GO" id="GO:0048038">
    <property type="term" value="F:quinone binding"/>
    <property type="evidence" value="ECO:0007669"/>
    <property type="project" value="InterPro"/>
</dbReference>
<dbReference type="GO" id="GO:0006120">
    <property type="term" value="P:mitochondrial electron transport, NADH to ubiquinone"/>
    <property type="evidence" value="ECO:0000318"/>
    <property type="project" value="GO_Central"/>
</dbReference>
<dbReference type="FunFam" id="1.10.645.10:FF:000005">
    <property type="entry name" value="NADH-quinone oxidoreductase subunit D"/>
    <property type="match status" value="1"/>
</dbReference>
<dbReference type="Gene3D" id="1.10.645.10">
    <property type="entry name" value="Cytochrome-c3 Hydrogenase, chain B"/>
    <property type="match status" value="1"/>
</dbReference>
<dbReference type="HAMAP" id="MF_01358">
    <property type="entry name" value="NDH1_NuoD"/>
    <property type="match status" value="1"/>
</dbReference>
<dbReference type="InterPro" id="IPR001135">
    <property type="entry name" value="NADH_Q_OxRdtase_suD"/>
</dbReference>
<dbReference type="InterPro" id="IPR014029">
    <property type="entry name" value="NADH_UbQ_OxRdtase_49kDa_CS"/>
</dbReference>
<dbReference type="InterPro" id="IPR022885">
    <property type="entry name" value="NDH1_su_D/H"/>
</dbReference>
<dbReference type="InterPro" id="IPR029014">
    <property type="entry name" value="NiFe-Hase_large"/>
</dbReference>
<dbReference type="NCBIfam" id="TIGR01962">
    <property type="entry name" value="NuoD"/>
    <property type="match status" value="1"/>
</dbReference>
<dbReference type="NCBIfam" id="NF004739">
    <property type="entry name" value="PRK06075.1"/>
    <property type="match status" value="1"/>
</dbReference>
<dbReference type="PANTHER" id="PTHR11993:SF10">
    <property type="entry name" value="NADH DEHYDROGENASE [UBIQUINONE] IRON-SULFUR PROTEIN 2, MITOCHONDRIAL"/>
    <property type="match status" value="1"/>
</dbReference>
<dbReference type="PANTHER" id="PTHR11993">
    <property type="entry name" value="NADH-UBIQUINONE OXIDOREDUCTASE 49 KDA SUBUNIT"/>
    <property type="match status" value="1"/>
</dbReference>
<dbReference type="Pfam" id="PF00346">
    <property type="entry name" value="Complex1_49kDa"/>
    <property type="match status" value="1"/>
</dbReference>
<dbReference type="SUPFAM" id="SSF56762">
    <property type="entry name" value="HydB/Nqo4-like"/>
    <property type="match status" value="1"/>
</dbReference>
<dbReference type="PROSITE" id="PS00535">
    <property type="entry name" value="COMPLEX1_49K"/>
    <property type="match status" value="1"/>
</dbReference>
<accession>Q23883</accession>
<accession>Q9XPJ8</accession>
<keyword id="KW-0903">Direct protein sequencing</keyword>
<keyword id="KW-0249">Electron transport</keyword>
<keyword id="KW-0472">Membrane</keyword>
<keyword id="KW-0496">Mitochondrion</keyword>
<keyword id="KW-0999">Mitochondrion inner membrane</keyword>
<keyword id="KW-0520">NAD</keyword>
<keyword id="KW-0560">Oxidoreductase</keyword>
<keyword id="KW-1185">Reference proteome</keyword>
<keyword id="KW-0679">Respiratory chain</keyword>
<keyword id="KW-1278">Translocase</keyword>
<keyword id="KW-0813">Transport</keyword>
<keyword id="KW-0830">Ubiquinone</keyword>
<proteinExistence type="evidence at protein level"/>
<comment type="function">
    <text evidence="1">Core subunit of the mitochondrial membrane respiratory chain NADH dehydrogenase (Complex I) that is believed to belong to the minimal assembly required for catalysis. Complex I functions in the transfer of electrons from NADH to the respiratory chain. The immediate electron acceptor for the enzyme is believed to be ubiquinone.</text>
</comment>
<comment type="catalytic activity">
    <reaction>
        <text>a ubiquinone + NADH + 5 H(+)(in) = a ubiquinol + NAD(+) + 4 H(+)(out)</text>
        <dbReference type="Rhea" id="RHEA:29091"/>
        <dbReference type="Rhea" id="RHEA-COMP:9565"/>
        <dbReference type="Rhea" id="RHEA-COMP:9566"/>
        <dbReference type="ChEBI" id="CHEBI:15378"/>
        <dbReference type="ChEBI" id="CHEBI:16389"/>
        <dbReference type="ChEBI" id="CHEBI:17976"/>
        <dbReference type="ChEBI" id="CHEBI:57540"/>
        <dbReference type="ChEBI" id="CHEBI:57945"/>
        <dbReference type="EC" id="7.1.1.2"/>
    </reaction>
</comment>
<comment type="subunit">
    <text evidence="1">Complex I is composed of 45 different subunits. Component of the iron-sulfur (IP) fragment of the enzyme.</text>
</comment>
<comment type="subcellular location">
    <subcellularLocation>
        <location evidence="1">Mitochondrion inner membrane</location>
        <topology evidence="1">Peripheral membrane protein</topology>
        <orientation evidence="1">Matrix side</orientation>
    </subcellularLocation>
</comment>
<comment type="similarity">
    <text evidence="2">Belongs to the complex I 49 kDa subunit family.</text>
</comment>
<feature type="chain" id="PRO_0000118589" description="NADH-ubiquinone oxidoreductase 49 kDa subunit">
    <location>
        <begin position="1"/>
        <end position="406"/>
    </location>
</feature>
<sequence length="406" mass="46833">MLNISKIFEEVKVMKNFTLNFGPQHPAAHGVLRLIVELESENVVRVEPHIGLLHRGTEKLIEGKTYTQALPYFDRLDYVSMNVQEHAYSLAVERLYLDSLDIELEIPQRAKVIRVLFSEITRVLNHIMATTTHAMDVGALTPFLWAFEEREKLMEFYERVSGARMHAAYIRPGGVAFDLPMNISEDIYKFVIQYRKRLEEIEDMLINNRIWKQRLVDIGIVSAEEALNYGFTGPLLRGAGIVYDIRKNYPYDDYDKYDFKIIIGEENNSYTRFIIRMKEMYQSLSIIEQALNNLRPGLIKLEGVNITAPDRAFVKKDMESCINHFKFFSEGFIIPANENYTIVEAPKGEFGIYLNANDTAKPYRCRIKAPGFLHLQGLNMMSKDHLLADVVTLIGTQDIVFGEVDR</sequence>
<organism>
    <name type="scientific">Dictyostelium discoideum</name>
    <name type="common">Social amoeba</name>
    <dbReference type="NCBI Taxonomy" id="44689"/>
    <lineage>
        <taxon>Eukaryota</taxon>
        <taxon>Amoebozoa</taxon>
        <taxon>Evosea</taxon>
        <taxon>Eumycetozoa</taxon>
        <taxon>Dictyostelia</taxon>
        <taxon>Dictyosteliales</taxon>
        <taxon>Dictyosteliaceae</taxon>
        <taxon>Dictyostelium</taxon>
    </lineage>
</organism>
<protein>
    <recommendedName>
        <fullName>NADH-ubiquinone oxidoreductase 49 kDa subunit</fullName>
        <ecNumber>7.1.1.2</ecNumber>
    </recommendedName>
    <alternativeName>
        <fullName>NADH dehydrogenase subunit 7</fullName>
    </alternativeName>
</protein>
<reference key="1">
    <citation type="journal article" date="1995" name="DNA Res.">
        <title>Mitochondrial ribosomal protein L11 gene of Dictyostelium discoideum resides not in the nuclear genome but in the mitochondrial genome.</title>
        <authorList>
            <person name="Iwamoto M."/>
            <person name="Yanagisawa K."/>
            <person name="Tanaka Y."/>
        </authorList>
    </citation>
    <scope>NUCLEOTIDE SEQUENCE [GENOMIC DNA]</scope>
    <source>
        <strain>AX3</strain>
    </source>
</reference>
<reference key="2">
    <citation type="journal article" date="2000" name="Mol. Gen. Genet.">
        <title>The mitochondrial DNA of Dictyostelium discoideum: complete sequence, gene content and genome organization.</title>
        <authorList>
            <person name="Ogawa S."/>
            <person name="Yoshino R."/>
            <person name="Angata K."/>
            <person name="Iwamoto M."/>
            <person name="Pi M."/>
            <person name="Kuroe K."/>
            <person name="Matsuo K."/>
            <person name="Morio T."/>
            <person name="Urushihara H."/>
            <person name="Yanagisawa K."/>
            <person name="Tanaka Y."/>
        </authorList>
    </citation>
    <scope>NUCLEOTIDE SEQUENCE [LARGE SCALE GENOMIC DNA]</scope>
    <source>
        <strain>AX3</strain>
    </source>
</reference>
<reference key="3">
    <citation type="submission" date="2009-07" db="UniProtKB">
        <authorList>
            <person name="Bienvenut W.V."/>
            <person name="Ura S."/>
            <person name="Insall R.H."/>
        </authorList>
    </citation>
    <scope>PROTEIN SEQUENCE OF 34-45; 115-122; 238-246 AND 261-272</scope>
    <scope>IDENTIFICATION BY MASS SPECTROMETRY</scope>
    <source>
        <strain>AX2</strain>
    </source>
</reference>
<reference key="4">
    <citation type="journal article" date="2010" name="J. Cell Sci.">
        <title>MidA is a putative methyltransferase that is required for mitochondrial complex I function.</title>
        <authorList>
            <person name="Carilla-Latorre S."/>
            <person name="Gallardo M.E."/>
            <person name="Annesley S.J."/>
            <person name="Calvo-Garrido J."/>
            <person name="Grana O."/>
            <person name="Accari S.L."/>
            <person name="Smith P.K."/>
            <person name="Valencia A."/>
            <person name="Garesse R."/>
            <person name="Fisher P.R."/>
            <person name="Escalante R."/>
        </authorList>
    </citation>
    <scope>INTERACTION WITH NDUFAF7</scope>
</reference>